<reference key="1">
    <citation type="submission" date="2008-02" db="EMBL/GenBank/DDBJ databases">
        <title>Complete sequence of Escherichia coli C str. ATCC 8739.</title>
        <authorList>
            <person name="Copeland A."/>
            <person name="Lucas S."/>
            <person name="Lapidus A."/>
            <person name="Glavina del Rio T."/>
            <person name="Dalin E."/>
            <person name="Tice H."/>
            <person name="Bruce D."/>
            <person name="Goodwin L."/>
            <person name="Pitluck S."/>
            <person name="Kiss H."/>
            <person name="Brettin T."/>
            <person name="Detter J.C."/>
            <person name="Han C."/>
            <person name="Kuske C.R."/>
            <person name="Schmutz J."/>
            <person name="Larimer F."/>
            <person name="Land M."/>
            <person name="Hauser L."/>
            <person name="Kyrpides N."/>
            <person name="Mikhailova N."/>
            <person name="Ingram L."/>
            <person name="Richardson P."/>
        </authorList>
    </citation>
    <scope>NUCLEOTIDE SEQUENCE [LARGE SCALE GENOMIC DNA]</scope>
    <source>
        <strain>ATCC 8739 / DSM 1576 / NBRC 3972 / NCIMB 8545 / WDCM 00012 / Crooks</strain>
    </source>
</reference>
<gene>
    <name evidence="1" type="primary">serS</name>
    <name type="ordered locus">EcolC_2703</name>
</gene>
<dbReference type="EC" id="6.1.1.11" evidence="1"/>
<dbReference type="EMBL" id="CP000946">
    <property type="protein sequence ID" value="ACA78332.1"/>
    <property type="molecule type" value="Genomic_DNA"/>
</dbReference>
<dbReference type="RefSeq" id="WP_000886683.1">
    <property type="nucleotide sequence ID" value="NZ_MTFT01000009.1"/>
</dbReference>
<dbReference type="SMR" id="B1IWN0"/>
<dbReference type="GeneID" id="93776527"/>
<dbReference type="KEGG" id="ecl:EcolC_2703"/>
<dbReference type="HOGENOM" id="CLU_023797_1_1_6"/>
<dbReference type="UniPathway" id="UPA00906">
    <property type="reaction ID" value="UER00895"/>
</dbReference>
<dbReference type="GO" id="GO:0005737">
    <property type="term" value="C:cytoplasm"/>
    <property type="evidence" value="ECO:0007669"/>
    <property type="project" value="UniProtKB-SubCell"/>
</dbReference>
<dbReference type="GO" id="GO:0005524">
    <property type="term" value="F:ATP binding"/>
    <property type="evidence" value="ECO:0007669"/>
    <property type="project" value="UniProtKB-UniRule"/>
</dbReference>
<dbReference type="GO" id="GO:0004828">
    <property type="term" value="F:serine-tRNA ligase activity"/>
    <property type="evidence" value="ECO:0007669"/>
    <property type="project" value="UniProtKB-UniRule"/>
</dbReference>
<dbReference type="GO" id="GO:0016260">
    <property type="term" value="P:selenocysteine biosynthetic process"/>
    <property type="evidence" value="ECO:0007669"/>
    <property type="project" value="UniProtKB-UniRule"/>
</dbReference>
<dbReference type="GO" id="GO:0006434">
    <property type="term" value="P:seryl-tRNA aminoacylation"/>
    <property type="evidence" value="ECO:0007669"/>
    <property type="project" value="UniProtKB-UniRule"/>
</dbReference>
<dbReference type="CDD" id="cd00770">
    <property type="entry name" value="SerRS_core"/>
    <property type="match status" value="1"/>
</dbReference>
<dbReference type="FunFam" id="1.10.287.40:FF:000001">
    <property type="entry name" value="Serine--tRNA ligase"/>
    <property type="match status" value="1"/>
</dbReference>
<dbReference type="FunFam" id="3.30.930.10:FF:000018">
    <property type="entry name" value="Serine--tRNA ligase"/>
    <property type="match status" value="1"/>
</dbReference>
<dbReference type="Gene3D" id="3.30.930.10">
    <property type="entry name" value="Bira Bifunctional Protein, Domain 2"/>
    <property type="match status" value="1"/>
</dbReference>
<dbReference type="Gene3D" id="1.10.287.40">
    <property type="entry name" value="Serine-tRNA synthetase, tRNA binding domain"/>
    <property type="match status" value="1"/>
</dbReference>
<dbReference type="HAMAP" id="MF_00176">
    <property type="entry name" value="Ser_tRNA_synth_type1"/>
    <property type="match status" value="1"/>
</dbReference>
<dbReference type="InterPro" id="IPR002314">
    <property type="entry name" value="aa-tRNA-synt_IIb"/>
</dbReference>
<dbReference type="InterPro" id="IPR006195">
    <property type="entry name" value="aa-tRNA-synth_II"/>
</dbReference>
<dbReference type="InterPro" id="IPR045864">
    <property type="entry name" value="aa-tRNA-synth_II/BPL/LPL"/>
</dbReference>
<dbReference type="InterPro" id="IPR002317">
    <property type="entry name" value="Ser-tRNA-ligase_type_1"/>
</dbReference>
<dbReference type="InterPro" id="IPR015866">
    <property type="entry name" value="Ser-tRNA-synth_1_N"/>
</dbReference>
<dbReference type="InterPro" id="IPR042103">
    <property type="entry name" value="SerRS_1_N_sf"/>
</dbReference>
<dbReference type="InterPro" id="IPR033729">
    <property type="entry name" value="SerRS_core"/>
</dbReference>
<dbReference type="InterPro" id="IPR010978">
    <property type="entry name" value="tRNA-bd_arm"/>
</dbReference>
<dbReference type="NCBIfam" id="TIGR00414">
    <property type="entry name" value="serS"/>
    <property type="match status" value="1"/>
</dbReference>
<dbReference type="PANTHER" id="PTHR43697:SF1">
    <property type="entry name" value="SERINE--TRNA LIGASE"/>
    <property type="match status" value="1"/>
</dbReference>
<dbReference type="PANTHER" id="PTHR43697">
    <property type="entry name" value="SERYL-TRNA SYNTHETASE"/>
    <property type="match status" value="1"/>
</dbReference>
<dbReference type="Pfam" id="PF02403">
    <property type="entry name" value="Seryl_tRNA_N"/>
    <property type="match status" value="1"/>
</dbReference>
<dbReference type="Pfam" id="PF00587">
    <property type="entry name" value="tRNA-synt_2b"/>
    <property type="match status" value="1"/>
</dbReference>
<dbReference type="PIRSF" id="PIRSF001529">
    <property type="entry name" value="Ser-tRNA-synth_IIa"/>
    <property type="match status" value="1"/>
</dbReference>
<dbReference type="PRINTS" id="PR00981">
    <property type="entry name" value="TRNASYNTHSER"/>
</dbReference>
<dbReference type="SUPFAM" id="SSF55681">
    <property type="entry name" value="Class II aaRS and biotin synthetases"/>
    <property type="match status" value="1"/>
</dbReference>
<dbReference type="SUPFAM" id="SSF46589">
    <property type="entry name" value="tRNA-binding arm"/>
    <property type="match status" value="1"/>
</dbReference>
<dbReference type="PROSITE" id="PS50862">
    <property type="entry name" value="AA_TRNA_LIGASE_II"/>
    <property type="match status" value="1"/>
</dbReference>
<proteinExistence type="inferred from homology"/>
<organism>
    <name type="scientific">Escherichia coli (strain ATCC 8739 / DSM 1576 / NBRC 3972 / NCIMB 8545 / WDCM 00012 / Crooks)</name>
    <dbReference type="NCBI Taxonomy" id="481805"/>
    <lineage>
        <taxon>Bacteria</taxon>
        <taxon>Pseudomonadati</taxon>
        <taxon>Pseudomonadota</taxon>
        <taxon>Gammaproteobacteria</taxon>
        <taxon>Enterobacterales</taxon>
        <taxon>Enterobacteriaceae</taxon>
        <taxon>Escherichia</taxon>
    </lineage>
</organism>
<comment type="function">
    <text evidence="1">Catalyzes the attachment of serine to tRNA(Ser). Is also able to aminoacylate tRNA(Sec) with serine, to form the misacylated tRNA L-seryl-tRNA(Sec), which will be further converted into selenocysteinyl-tRNA(Sec).</text>
</comment>
<comment type="catalytic activity">
    <reaction evidence="1">
        <text>tRNA(Ser) + L-serine + ATP = L-seryl-tRNA(Ser) + AMP + diphosphate + H(+)</text>
        <dbReference type="Rhea" id="RHEA:12292"/>
        <dbReference type="Rhea" id="RHEA-COMP:9669"/>
        <dbReference type="Rhea" id="RHEA-COMP:9703"/>
        <dbReference type="ChEBI" id="CHEBI:15378"/>
        <dbReference type="ChEBI" id="CHEBI:30616"/>
        <dbReference type="ChEBI" id="CHEBI:33019"/>
        <dbReference type="ChEBI" id="CHEBI:33384"/>
        <dbReference type="ChEBI" id="CHEBI:78442"/>
        <dbReference type="ChEBI" id="CHEBI:78533"/>
        <dbReference type="ChEBI" id="CHEBI:456215"/>
        <dbReference type="EC" id="6.1.1.11"/>
    </reaction>
</comment>
<comment type="catalytic activity">
    <reaction evidence="1">
        <text>tRNA(Sec) + L-serine + ATP = L-seryl-tRNA(Sec) + AMP + diphosphate + H(+)</text>
        <dbReference type="Rhea" id="RHEA:42580"/>
        <dbReference type="Rhea" id="RHEA-COMP:9742"/>
        <dbReference type="Rhea" id="RHEA-COMP:10128"/>
        <dbReference type="ChEBI" id="CHEBI:15378"/>
        <dbReference type="ChEBI" id="CHEBI:30616"/>
        <dbReference type="ChEBI" id="CHEBI:33019"/>
        <dbReference type="ChEBI" id="CHEBI:33384"/>
        <dbReference type="ChEBI" id="CHEBI:78442"/>
        <dbReference type="ChEBI" id="CHEBI:78533"/>
        <dbReference type="ChEBI" id="CHEBI:456215"/>
        <dbReference type="EC" id="6.1.1.11"/>
    </reaction>
</comment>
<comment type="pathway">
    <text evidence="1">Aminoacyl-tRNA biosynthesis; selenocysteinyl-tRNA(Sec) biosynthesis; L-seryl-tRNA(Sec) from L-serine and tRNA(Sec): step 1/1.</text>
</comment>
<comment type="subunit">
    <text evidence="1">Homodimer. The tRNA molecule binds across the dimer.</text>
</comment>
<comment type="subcellular location">
    <subcellularLocation>
        <location evidence="1">Cytoplasm</location>
    </subcellularLocation>
</comment>
<comment type="domain">
    <text evidence="1">Consists of two distinct domains, a catalytic core and a N-terminal extension that is involved in tRNA binding.</text>
</comment>
<comment type="similarity">
    <text evidence="1">Belongs to the class-II aminoacyl-tRNA synthetase family. Type-1 seryl-tRNA synthetase subfamily.</text>
</comment>
<name>SYS_ECOLC</name>
<feature type="chain" id="PRO_1000077196" description="Serine--tRNA ligase">
    <location>
        <begin position="1"/>
        <end position="430"/>
    </location>
</feature>
<feature type="binding site" evidence="1">
    <location>
        <begin position="237"/>
        <end position="239"/>
    </location>
    <ligand>
        <name>L-serine</name>
        <dbReference type="ChEBI" id="CHEBI:33384"/>
    </ligand>
</feature>
<feature type="binding site" evidence="1">
    <location>
        <begin position="268"/>
        <end position="270"/>
    </location>
    <ligand>
        <name>ATP</name>
        <dbReference type="ChEBI" id="CHEBI:30616"/>
    </ligand>
</feature>
<feature type="binding site" evidence="1">
    <location>
        <position position="291"/>
    </location>
    <ligand>
        <name>L-serine</name>
        <dbReference type="ChEBI" id="CHEBI:33384"/>
    </ligand>
</feature>
<feature type="binding site" evidence="1">
    <location>
        <begin position="355"/>
        <end position="358"/>
    </location>
    <ligand>
        <name>ATP</name>
        <dbReference type="ChEBI" id="CHEBI:30616"/>
    </ligand>
</feature>
<feature type="binding site" evidence="1">
    <location>
        <position position="391"/>
    </location>
    <ligand>
        <name>L-serine</name>
        <dbReference type="ChEBI" id="CHEBI:33384"/>
    </ligand>
</feature>
<sequence length="430" mass="48414">MLDPNLLRNEPDAVAEKLARRGFKLDVDKLGALEERRKVLQVKTENLQAERNSRSKSIGQAKARGEDIEPLRLEVNKLGEELDAAKAELDALQAEIRDIALTIPNLPADEVPVGKDENDNVEVSRWGTPREFDFEVRDHVTLGEMHSGLDFAAAVKLTGSRFVVMKGQIARMHRALSQFMLDLHTEQHGYSENYVPYLVNQDTLYGTGQLPKFAGDLFHTRPLEEEADTSNYALIPTAEVPLTNLVRGEIIDEDDLPIKMTAHTPCFRSEAGSYGRDTRGLIRMHQFDKVEMVQIVRPEDSMAALEEMTGHAEKVLQLLGLPYRKIILCTGDMGFGACKTYDLEVWIPAQNTYREISSCSNVWDFQARRMQARCRSKSDKKTRLVHTLNGSGLAVGRTLVAVMENYQQADGRIEVPEVLRPYMNGLEYIG</sequence>
<accession>B1IWN0</accession>
<evidence type="ECO:0000255" key="1">
    <source>
        <dbReference type="HAMAP-Rule" id="MF_00176"/>
    </source>
</evidence>
<keyword id="KW-0030">Aminoacyl-tRNA synthetase</keyword>
<keyword id="KW-0067">ATP-binding</keyword>
<keyword id="KW-0963">Cytoplasm</keyword>
<keyword id="KW-0436">Ligase</keyword>
<keyword id="KW-0547">Nucleotide-binding</keyword>
<keyword id="KW-0648">Protein biosynthesis</keyword>
<protein>
    <recommendedName>
        <fullName evidence="1">Serine--tRNA ligase</fullName>
        <ecNumber evidence="1">6.1.1.11</ecNumber>
    </recommendedName>
    <alternativeName>
        <fullName evidence="1">Seryl-tRNA synthetase</fullName>
        <shortName evidence="1">SerRS</shortName>
    </alternativeName>
    <alternativeName>
        <fullName evidence="1">Seryl-tRNA(Ser/Sec) synthetase</fullName>
    </alternativeName>
</protein>